<proteinExistence type="inferred from homology"/>
<accession>Q7U4U1</accession>
<evidence type="ECO:0000255" key="1">
    <source>
        <dbReference type="HAMAP-Rule" id="MF_00262"/>
    </source>
</evidence>
<dbReference type="EMBL" id="BX569694">
    <property type="protein sequence ID" value="CAE08487.1"/>
    <property type="molecule type" value="Genomic_DNA"/>
</dbReference>
<dbReference type="RefSeq" id="WP_011128830.1">
    <property type="nucleotide sequence ID" value="NC_005070.1"/>
</dbReference>
<dbReference type="SMR" id="Q7U4U1"/>
<dbReference type="STRING" id="84588.SYNW1972"/>
<dbReference type="KEGG" id="syw:SYNW1972"/>
<dbReference type="eggNOG" id="COG0851">
    <property type="taxonomic scope" value="Bacteria"/>
</dbReference>
<dbReference type="HOGENOM" id="CLU_137929_1_1_3"/>
<dbReference type="Proteomes" id="UP000001422">
    <property type="component" value="Chromosome"/>
</dbReference>
<dbReference type="GO" id="GO:0051301">
    <property type="term" value="P:cell division"/>
    <property type="evidence" value="ECO:0007669"/>
    <property type="project" value="UniProtKB-KW"/>
</dbReference>
<dbReference type="GO" id="GO:0032955">
    <property type="term" value="P:regulation of division septum assembly"/>
    <property type="evidence" value="ECO:0007669"/>
    <property type="project" value="InterPro"/>
</dbReference>
<dbReference type="Gene3D" id="3.30.1070.10">
    <property type="entry name" value="Cell division topological specificity factor MinE"/>
    <property type="match status" value="1"/>
</dbReference>
<dbReference type="HAMAP" id="MF_00262">
    <property type="entry name" value="MinE"/>
    <property type="match status" value="1"/>
</dbReference>
<dbReference type="InterPro" id="IPR005527">
    <property type="entry name" value="MinE"/>
</dbReference>
<dbReference type="InterPro" id="IPR036707">
    <property type="entry name" value="MinE_sf"/>
</dbReference>
<dbReference type="NCBIfam" id="TIGR01215">
    <property type="entry name" value="minE"/>
    <property type="match status" value="1"/>
</dbReference>
<dbReference type="NCBIfam" id="NF001422">
    <property type="entry name" value="PRK00296.1"/>
    <property type="match status" value="1"/>
</dbReference>
<dbReference type="Pfam" id="PF03776">
    <property type="entry name" value="MinE"/>
    <property type="match status" value="1"/>
</dbReference>
<dbReference type="SUPFAM" id="SSF55229">
    <property type="entry name" value="Cell division protein MinE topological specificity domain"/>
    <property type="match status" value="1"/>
</dbReference>
<reference key="1">
    <citation type="journal article" date="2003" name="Nature">
        <title>The genome of a motile marine Synechococcus.</title>
        <authorList>
            <person name="Palenik B."/>
            <person name="Brahamsha B."/>
            <person name="Larimer F.W."/>
            <person name="Land M.L."/>
            <person name="Hauser L."/>
            <person name="Chain P."/>
            <person name="Lamerdin J.E."/>
            <person name="Regala W."/>
            <person name="Allen E.E."/>
            <person name="McCarren J."/>
            <person name="Paulsen I.T."/>
            <person name="Dufresne A."/>
            <person name="Partensky F."/>
            <person name="Webb E.A."/>
            <person name="Waterbury J."/>
        </authorList>
    </citation>
    <scope>NUCLEOTIDE SEQUENCE [LARGE SCALE GENOMIC DNA]</scope>
    <source>
        <strain>WH8102</strain>
    </source>
</reference>
<organism>
    <name type="scientific">Parasynechococcus marenigrum (strain WH8102)</name>
    <dbReference type="NCBI Taxonomy" id="84588"/>
    <lineage>
        <taxon>Bacteria</taxon>
        <taxon>Bacillati</taxon>
        <taxon>Cyanobacteriota</taxon>
        <taxon>Cyanophyceae</taxon>
        <taxon>Synechococcales</taxon>
        <taxon>Prochlorococcaceae</taxon>
        <taxon>Parasynechococcus</taxon>
        <taxon>Parasynechococcus marenigrum</taxon>
    </lineage>
</organism>
<sequence length="86" mass="9809">MTLQDLIDKLLGRQPASADTARQRLQLVLAHDRSDLNPELLDQMRREILEVVSRYVEIDLSEGDVSLETEDRVTALVANLPIRRTL</sequence>
<name>MINE_PARMW</name>
<feature type="chain" id="PRO_0000298204" description="Cell division topological specificity factor">
    <location>
        <begin position="1"/>
        <end position="86"/>
    </location>
</feature>
<protein>
    <recommendedName>
        <fullName evidence="1">Cell division topological specificity factor</fullName>
    </recommendedName>
</protein>
<gene>
    <name evidence="1" type="primary">minE</name>
    <name type="ordered locus">SYNW1972</name>
</gene>
<keyword id="KW-0131">Cell cycle</keyword>
<keyword id="KW-0132">Cell division</keyword>
<comment type="function">
    <text evidence="1">Prevents the cell division inhibition by proteins MinC and MinD at internal division sites while permitting inhibition at polar sites. This ensures cell division at the proper site by restricting the formation of a division septum at the midpoint of the long axis of the cell.</text>
</comment>
<comment type="similarity">
    <text evidence="1">Belongs to the MinE family.</text>
</comment>